<accession>Q5PKY6</accession>
<keyword id="KW-0012">Acyltransferase</keyword>
<keyword id="KW-0028">Amino-acid biosynthesis</keyword>
<keyword id="KW-0963">Cytoplasm</keyword>
<keyword id="KW-0486">Methionine biosynthesis</keyword>
<keyword id="KW-0808">Transferase</keyword>
<gene>
    <name evidence="1" type="primary">metAS</name>
    <name type="ordered locus">SPA4020</name>
</gene>
<comment type="function">
    <text evidence="1">Transfers a succinyl group from succinyl-CoA to L-homoserine, forming succinyl-L-homoserine.</text>
</comment>
<comment type="catalytic activity">
    <reaction evidence="1">
        <text>L-homoserine + succinyl-CoA = O-succinyl-L-homoserine + CoA</text>
        <dbReference type="Rhea" id="RHEA:22008"/>
        <dbReference type="ChEBI" id="CHEBI:57287"/>
        <dbReference type="ChEBI" id="CHEBI:57292"/>
        <dbReference type="ChEBI" id="CHEBI:57476"/>
        <dbReference type="ChEBI" id="CHEBI:57661"/>
        <dbReference type="EC" id="2.3.1.46"/>
    </reaction>
</comment>
<comment type="pathway">
    <text evidence="1">Amino-acid biosynthesis; L-methionine biosynthesis via de novo pathway; O-succinyl-L-homoserine from L-homoserine: step 1/1.</text>
</comment>
<comment type="subunit">
    <text evidence="1">Homodimer.</text>
</comment>
<comment type="subcellular location">
    <subcellularLocation>
        <location evidence="1">Cytoplasm</location>
    </subcellularLocation>
</comment>
<comment type="similarity">
    <text evidence="1">Belongs to the MetA family.</text>
</comment>
<reference key="1">
    <citation type="journal article" date="2004" name="Nat. Genet.">
        <title>Comparison of genome degradation in Paratyphi A and Typhi, human-restricted serovars of Salmonella enterica that cause typhoid.</title>
        <authorList>
            <person name="McClelland M."/>
            <person name="Sanderson K.E."/>
            <person name="Clifton S.W."/>
            <person name="Latreille P."/>
            <person name="Porwollik S."/>
            <person name="Sabo A."/>
            <person name="Meyer R."/>
            <person name="Bieri T."/>
            <person name="Ozersky P."/>
            <person name="McLellan M."/>
            <person name="Harkins C.R."/>
            <person name="Wang C."/>
            <person name="Nguyen C."/>
            <person name="Berghoff A."/>
            <person name="Elliott G."/>
            <person name="Kohlberg S."/>
            <person name="Strong C."/>
            <person name="Du F."/>
            <person name="Carter J."/>
            <person name="Kremizki C."/>
            <person name="Layman D."/>
            <person name="Leonard S."/>
            <person name="Sun H."/>
            <person name="Fulton L."/>
            <person name="Nash W."/>
            <person name="Miner T."/>
            <person name="Minx P."/>
            <person name="Delehaunty K."/>
            <person name="Fronick C."/>
            <person name="Magrini V."/>
            <person name="Nhan M."/>
            <person name="Warren W."/>
            <person name="Florea L."/>
            <person name="Spieth J."/>
            <person name="Wilson R.K."/>
        </authorList>
    </citation>
    <scope>NUCLEOTIDE SEQUENCE [LARGE SCALE GENOMIC DNA]</scope>
    <source>
        <strain>ATCC 9150 / SARB42</strain>
    </source>
</reference>
<sequence length="309" mass="35670">MPIRVLDELPAVNFLREENVFVMTTSRASGQEIRPLKVLILNLMPKKIETENQFLRLLSNSPLQVDIQLLRIDARESRNTPAEHLNNFYCNFDDICDQNFDGLIVTGAPLGLVEFNDVAYWPQIRQVLEWAKDHVTSTLFVCWAVQAALNILYGIPKQTRTDKLSGVYEHHILHPHALLTRGFDDSFLAPHSRYADFPAALIRDYTDLEILAETEEGDAYLFASKDKRIAFVTGHPEYDAHTLAGEYFRDVEAGLNPEVPYNYFPKNDPQNIPRATWRSHGNLLFTNWLNYYVYQITPYDLRHMNPTLD</sequence>
<evidence type="ECO:0000255" key="1">
    <source>
        <dbReference type="HAMAP-Rule" id="MF_00295"/>
    </source>
</evidence>
<protein>
    <recommendedName>
        <fullName evidence="1">Homoserine O-succinyltransferase</fullName>
        <shortName evidence="1">HST</shortName>
        <ecNumber evidence="1">2.3.1.46</ecNumber>
    </recommendedName>
    <alternativeName>
        <fullName evidence="1">Homoserine transsuccinylase</fullName>
        <shortName evidence="1">HTS</shortName>
    </alternativeName>
</protein>
<name>METAS_SALPA</name>
<organism>
    <name type="scientific">Salmonella paratyphi A (strain ATCC 9150 / SARB42)</name>
    <dbReference type="NCBI Taxonomy" id="295319"/>
    <lineage>
        <taxon>Bacteria</taxon>
        <taxon>Pseudomonadati</taxon>
        <taxon>Pseudomonadota</taxon>
        <taxon>Gammaproteobacteria</taxon>
        <taxon>Enterobacterales</taxon>
        <taxon>Enterobacteriaceae</taxon>
        <taxon>Salmonella</taxon>
    </lineage>
</organism>
<dbReference type="EC" id="2.3.1.46" evidence="1"/>
<dbReference type="EMBL" id="CP000026">
    <property type="protein sequence ID" value="AAV79767.1"/>
    <property type="molecule type" value="Genomic_DNA"/>
</dbReference>
<dbReference type="SMR" id="Q5PKY6"/>
<dbReference type="KEGG" id="spt:SPA4020"/>
<dbReference type="HOGENOM" id="CLU_057851_0_1_6"/>
<dbReference type="UniPathway" id="UPA00051">
    <property type="reaction ID" value="UER00075"/>
</dbReference>
<dbReference type="Proteomes" id="UP000008185">
    <property type="component" value="Chromosome"/>
</dbReference>
<dbReference type="GO" id="GO:0005737">
    <property type="term" value="C:cytoplasm"/>
    <property type="evidence" value="ECO:0007669"/>
    <property type="project" value="UniProtKB-SubCell"/>
</dbReference>
<dbReference type="GO" id="GO:0004414">
    <property type="term" value="F:homoserine O-acetyltransferase activity"/>
    <property type="evidence" value="ECO:0007669"/>
    <property type="project" value="UniProtKB-UniRule"/>
</dbReference>
<dbReference type="GO" id="GO:0008899">
    <property type="term" value="F:homoserine O-succinyltransferase activity"/>
    <property type="evidence" value="ECO:0007669"/>
    <property type="project" value="UniProtKB-EC"/>
</dbReference>
<dbReference type="GO" id="GO:0019281">
    <property type="term" value="P:L-methionine biosynthetic process from homoserine via O-succinyl-L-homoserine and cystathionine"/>
    <property type="evidence" value="ECO:0007669"/>
    <property type="project" value="InterPro"/>
</dbReference>
<dbReference type="CDD" id="cd03131">
    <property type="entry name" value="GATase1_HTS"/>
    <property type="match status" value="1"/>
</dbReference>
<dbReference type="FunFam" id="3.40.50.880:FF:000004">
    <property type="entry name" value="Homoserine O-succinyltransferase"/>
    <property type="match status" value="1"/>
</dbReference>
<dbReference type="Gene3D" id="3.40.50.880">
    <property type="match status" value="1"/>
</dbReference>
<dbReference type="HAMAP" id="MF_00295">
    <property type="entry name" value="MetA_acyltransf"/>
    <property type="match status" value="1"/>
</dbReference>
<dbReference type="InterPro" id="IPR029062">
    <property type="entry name" value="Class_I_gatase-like"/>
</dbReference>
<dbReference type="InterPro" id="IPR005697">
    <property type="entry name" value="HST_MetA"/>
</dbReference>
<dbReference type="InterPro" id="IPR033752">
    <property type="entry name" value="MetA_family"/>
</dbReference>
<dbReference type="NCBIfam" id="TIGR01001">
    <property type="entry name" value="metA"/>
    <property type="match status" value="1"/>
</dbReference>
<dbReference type="PANTHER" id="PTHR20919">
    <property type="entry name" value="HOMOSERINE O-SUCCINYLTRANSFERASE"/>
    <property type="match status" value="1"/>
</dbReference>
<dbReference type="PANTHER" id="PTHR20919:SF0">
    <property type="entry name" value="HOMOSERINE O-SUCCINYLTRANSFERASE"/>
    <property type="match status" value="1"/>
</dbReference>
<dbReference type="Pfam" id="PF04204">
    <property type="entry name" value="HTS"/>
    <property type="match status" value="1"/>
</dbReference>
<dbReference type="PIRSF" id="PIRSF000450">
    <property type="entry name" value="H_ser_succinyltr"/>
    <property type="match status" value="1"/>
</dbReference>
<dbReference type="SUPFAM" id="SSF52317">
    <property type="entry name" value="Class I glutamine amidotransferase-like"/>
    <property type="match status" value="1"/>
</dbReference>
<feature type="chain" id="PRO_1000021831" description="Homoserine O-succinyltransferase">
    <location>
        <begin position="1"/>
        <end position="309"/>
    </location>
</feature>
<feature type="active site" description="Acyl-thioester intermediate" evidence="1">
    <location>
        <position position="142"/>
    </location>
</feature>
<feature type="active site" description="Proton acceptor" evidence="1">
    <location>
        <position position="235"/>
    </location>
</feature>
<feature type="active site" evidence="1">
    <location>
        <position position="237"/>
    </location>
</feature>
<feature type="binding site" evidence="1">
    <location>
        <position position="163"/>
    </location>
    <ligand>
        <name>substrate</name>
    </ligand>
</feature>
<feature type="binding site" evidence="1">
    <location>
        <position position="192"/>
    </location>
    <ligand>
        <name>substrate</name>
    </ligand>
</feature>
<feature type="binding site" evidence="1">
    <location>
        <position position="249"/>
    </location>
    <ligand>
        <name>substrate</name>
    </ligand>
</feature>
<feature type="site" description="Important for acyl-CoA specificity" evidence="1">
    <location>
        <position position="111"/>
    </location>
</feature>
<feature type="site" description="Important for substrate specificity" evidence="1">
    <location>
        <position position="192"/>
    </location>
</feature>
<proteinExistence type="inferred from homology"/>